<protein>
    <recommendedName>
        <fullName>Gene 3 protein</fullName>
    </recommendedName>
</protein>
<organism>
    <name type="scientific">Equine herpesvirus 1 (strain V592)</name>
    <name type="common">EHV-1</name>
    <name type="synonym">Equine abortion virus</name>
    <dbReference type="NCBI Taxonomy" id="310273"/>
    <lineage>
        <taxon>Viruses</taxon>
        <taxon>Duplodnaviria</taxon>
        <taxon>Heunggongvirae</taxon>
        <taxon>Peploviricota</taxon>
        <taxon>Herviviricetes</taxon>
        <taxon>Herpesvirales</taxon>
        <taxon>Orthoherpesviridae</taxon>
        <taxon>Alphaherpesvirinae</taxon>
        <taxon>Varicellovirus</taxon>
        <taxon>Varicellovirus equidalpha1</taxon>
        <taxon>Equid alphaherpesvirus 1</taxon>
    </lineage>
</organism>
<feature type="chain" id="PRO_0000116161" description="Gene 3 protein">
    <location>
        <begin position="1"/>
        <end position="257"/>
    </location>
</feature>
<feature type="region of interest" description="Disordered" evidence="1">
    <location>
        <begin position="163"/>
        <end position="257"/>
    </location>
</feature>
<feature type="compositionally biased region" description="Polar residues" evidence="1">
    <location>
        <begin position="163"/>
        <end position="176"/>
    </location>
</feature>
<feature type="compositionally biased region" description="Basic and acidic residues" evidence="1">
    <location>
        <begin position="214"/>
        <end position="240"/>
    </location>
</feature>
<sequence length="257" mass="28023">MGACCSSRRNRSPSLAALAEETEVVLRCLAGRVVDLPGGDEVRIAPDVGRPGQNFGYFKFPGPSRFAYVKFIGRAYALGSGRKFLLYLSRNFQVFGYEDGTGLHMLAKSLHDFLKFKGLSDRDLVVVDSVALTSQLRPLTLPIRSTSDVETLVAEEATTNYTSTENLLGQTQSSTHRPLGVPLSNVKTMGVPPTKPSSQRPRGKGGRPPARLKSIREETVSGMARAREECNSPSEHDRLTSEMTDCDSDSSVSSVFF</sequence>
<name>VG03_EHV1V</name>
<accession>Q6S6R8</accession>
<reference key="1">
    <citation type="submission" date="2003-11" db="EMBL/GenBank/DDBJ databases">
        <authorList>
            <person name="Davis-Poynter N.J."/>
            <person name="Nugent J."/>
            <person name="Birch-Machin I."/>
            <person name="Allen G.P."/>
        </authorList>
    </citation>
    <scope>NUCLEOTIDE SEQUENCE [LARGE SCALE GENOMIC DNA]</scope>
</reference>
<proteinExistence type="predicted"/>
<organismHost>
    <name type="scientific">Equus caballus</name>
    <name type="common">Horse</name>
    <dbReference type="NCBI Taxonomy" id="9796"/>
</organismHost>
<gene>
    <name type="ordered locus">3</name>
</gene>
<evidence type="ECO:0000256" key="1">
    <source>
        <dbReference type="SAM" id="MobiDB-lite"/>
    </source>
</evidence>
<dbReference type="EMBL" id="AY464052">
    <property type="protein sequence ID" value="AAS45887.1"/>
    <property type="molecule type" value="Genomic_DNA"/>
</dbReference>
<dbReference type="KEGG" id="vg:1487548"/>
<dbReference type="Proteomes" id="UP000008296">
    <property type="component" value="Segment"/>
</dbReference>
<dbReference type="InterPro" id="IPR010741">
    <property type="entry name" value="DUF1314"/>
</dbReference>
<dbReference type="Pfam" id="PF07013">
    <property type="entry name" value="DUF1314"/>
    <property type="match status" value="1"/>
</dbReference>